<evidence type="ECO:0000255" key="1">
    <source>
        <dbReference type="HAMAP-Rule" id="MF_00116"/>
    </source>
</evidence>
<organism>
    <name type="scientific">Hamiltonella defensa subsp. Acyrthosiphon pisum (strain 5AT)</name>
    <dbReference type="NCBI Taxonomy" id="572265"/>
    <lineage>
        <taxon>Bacteria</taxon>
        <taxon>Pseudomonadati</taxon>
        <taxon>Pseudomonadota</taxon>
        <taxon>Gammaproteobacteria</taxon>
        <taxon>Enterobacterales</taxon>
        <taxon>Enterobacteriaceae</taxon>
        <taxon>aphid secondary symbionts</taxon>
        <taxon>Candidatus Hamiltonella</taxon>
    </lineage>
</organism>
<sequence>MKKIDIKILDKRIGDVFPLPTYTTSGSAGLDLRVCTQAPQHLSPGETRLLPTGLAVHIADPHLAAMILPRSGLGHKNGIVLGNLVGLIDSDYQGELMLSVWNRSQIDFLINPGDRLAQMVFVPVVQVELNIVSEFTSSQRGSGGFGHSGRQ</sequence>
<gene>
    <name evidence="1" type="primary">dut</name>
    <name type="ordered locus">HDEF_2318</name>
</gene>
<dbReference type="EC" id="3.6.1.23" evidence="1"/>
<dbReference type="EMBL" id="CP001277">
    <property type="protein sequence ID" value="ACQ68855.1"/>
    <property type="molecule type" value="Genomic_DNA"/>
</dbReference>
<dbReference type="SMR" id="C4K8Y6"/>
<dbReference type="STRING" id="572265.HDEF_2318"/>
<dbReference type="KEGG" id="hde:HDEF_2318"/>
<dbReference type="eggNOG" id="COG0756">
    <property type="taxonomic scope" value="Bacteria"/>
</dbReference>
<dbReference type="HOGENOM" id="CLU_068508_1_1_6"/>
<dbReference type="UniPathway" id="UPA00610">
    <property type="reaction ID" value="UER00666"/>
</dbReference>
<dbReference type="Proteomes" id="UP000002334">
    <property type="component" value="Chromosome"/>
</dbReference>
<dbReference type="GO" id="GO:0004170">
    <property type="term" value="F:dUTP diphosphatase activity"/>
    <property type="evidence" value="ECO:0007669"/>
    <property type="project" value="UniProtKB-UniRule"/>
</dbReference>
<dbReference type="GO" id="GO:0000287">
    <property type="term" value="F:magnesium ion binding"/>
    <property type="evidence" value="ECO:0007669"/>
    <property type="project" value="UniProtKB-UniRule"/>
</dbReference>
<dbReference type="GO" id="GO:0006226">
    <property type="term" value="P:dUMP biosynthetic process"/>
    <property type="evidence" value="ECO:0007669"/>
    <property type="project" value="UniProtKB-UniRule"/>
</dbReference>
<dbReference type="GO" id="GO:0046081">
    <property type="term" value="P:dUTP catabolic process"/>
    <property type="evidence" value="ECO:0007669"/>
    <property type="project" value="InterPro"/>
</dbReference>
<dbReference type="CDD" id="cd07557">
    <property type="entry name" value="trimeric_dUTPase"/>
    <property type="match status" value="1"/>
</dbReference>
<dbReference type="FunFam" id="2.70.40.10:FF:000002">
    <property type="entry name" value="dUTP diphosphatase"/>
    <property type="match status" value="1"/>
</dbReference>
<dbReference type="Gene3D" id="2.70.40.10">
    <property type="match status" value="1"/>
</dbReference>
<dbReference type="HAMAP" id="MF_00116">
    <property type="entry name" value="dUTPase_bact"/>
    <property type="match status" value="1"/>
</dbReference>
<dbReference type="InterPro" id="IPR008181">
    <property type="entry name" value="dUTPase"/>
</dbReference>
<dbReference type="InterPro" id="IPR029054">
    <property type="entry name" value="dUTPase-like"/>
</dbReference>
<dbReference type="InterPro" id="IPR036157">
    <property type="entry name" value="dUTPase-like_sf"/>
</dbReference>
<dbReference type="InterPro" id="IPR033704">
    <property type="entry name" value="dUTPase_trimeric"/>
</dbReference>
<dbReference type="NCBIfam" id="TIGR00576">
    <property type="entry name" value="dut"/>
    <property type="match status" value="1"/>
</dbReference>
<dbReference type="NCBIfam" id="NF001862">
    <property type="entry name" value="PRK00601.1"/>
    <property type="match status" value="1"/>
</dbReference>
<dbReference type="PANTHER" id="PTHR11241">
    <property type="entry name" value="DEOXYURIDINE 5'-TRIPHOSPHATE NUCLEOTIDOHYDROLASE"/>
    <property type="match status" value="1"/>
</dbReference>
<dbReference type="PANTHER" id="PTHR11241:SF0">
    <property type="entry name" value="DEOXYURIDINE 5'-TRIPHOSPHATE NUCLEOTIDOHYDROLASE"/>
    <property type="match status" value="1"/>
</dbReference>
<dbReference type="Pfam" id="PF00692">
    <property type="entry name" value="dUTPase"/>
    <property type="match status" value="1"/>
</dbReference>
<dbReference type="SUPFAM" id="SSF51283">
    <property type="entry name" value="dUTPase-like"/>
    <property type="match status" value="1"/>
</dbReference>
<accession>C4K8Y6</accession>
<protein>
    <recommendedName>
        <fullName evidence="1">Deoxyuridine 5'-triphosphate nucleotidohydrolase</fullName>
        <shortName evidence="1">dUTPase</shortName>
        <ecNumber evidence="1">3.6.1.23</ecNumber>
    </recommendedName>
    <alternativeName>
        <fullName evidence="1">dUTP pyrophosphatase</fullName>
    </alternativeName>
</protein>
<feature type="chain" id="PRO_1000202985" description="Deoxyuridine 5'-triphosphate nucleotidohydrolase">
    <location>
        <begin position="1"/>
        <end position="151"/>
    </location>
</feature>
<feature type="binding site" evidence="1">
    <location>
        <begin position="70"/>
        <end position="72"/>
    </location>
    <ligand>
        <name>substrate</name>
    </ligand>
</feature>
<feature type="binding site" evidence="1">
    <location>
        <position position="83"/>
    </location>
    <ligand>
        <name>substrate</name>
    </ligand>
</feature>
<feature type="binding site" evidence="1">
    <location>
        <begin position="87"/>
        <end position="89"/>
    </location>
    <ligand>
        <name>substrate</name>
    </ligand>
</feature>
<feature type="binding site" evidence="1">
    <location>
        <position position="97"/>
    </location>
    <ligand>
        <name>substrate</name>
    </ligand>
</feature>
<name>DUT_HAMD5</name>
<proteinExistence type="inferred from homology"/>
<reference key="1">
    <citation type="journal article" date="2009" name="Proc. Natl. Acad. Sci. U.S.A.">
        <title>Hamiltonella defensa, genome evolution of protective bacterial endosymbiont from pathogenic ancestors.</title>
        <authorList>
            <person name="Degnan P.H."/>
            <person name="Yu Y."/>
            <person name="Sisneros N."/>
            <person name="Wing R.A."/>
            <person name="Moran N.A."/>
        </authorList>
    </citation>
    <scope>NUCLEOTIDE SEQUENCE [LARGE SCALE GENOMIC DNA]</scope>
    <source>
        <strain>5AT</strain>
    </source>
</reference>
<comment type="function">
    <text evidence="1">This enzyme is involved in nucleotide metabolism: it produces dUMP, the immediate precursor of thymidine nucleotides and it decreases the intracellular concentration of dUTP so that uracil cannot be incorporated into DNA.</text>
</comment>
<comment type="catalytic activity">
    <reaction evidence="1">
        <text>dUTP + H2O = dUMP + diphosphate + H(+)</text>
        <dbReference type="Rhea" id="RHEA:10248"/>
        <dbReference type="ChEBI" id="CHEBI:15377"/>
        <dbReference type="ChEBI" id="CHEBI:15378"/>
        <dbReference type="ChEBI" id="CHEBI:33019"/>
        <dbReference type="ChEBI" id="CHEBI:61555"/>
        <dbReference type="ChEBI" id="CHEBI:246422"/>
        <dbReference type="EC" id="3.6.1.23"/>
    </reaction>
</comment>
<comment type="cofactor">
    <cofactor evidence="1">
        <name>Mg(2+)</name>
        <dbReference type="ChEBI" id="CHEBI:18420"/>
    </cofactor>
</comment>
<comment type="pathway">
    <text evidence="1">Pyrimidine metabolism; dUMP biosynthesis; dUMP from dCTP (dUTP route): step 2/2.</text>
</comment>
<comment type="similarity">
    <text evidence="1">Belongs to the dUTPase family.</text>
</comment>
<keyword id="KW-0378">Hydrolase</keyword>
<keyword id="KW-0460">Magnesium</keyword>
<keyword id="KW-0479">Metal-binding</keyword>
<keyword id="KW-0546">Nucleotide metabolism</keyword>